<organism>
    <name type="scientific">Erythrobacter litoralis (strain HTCC2594)</name>
    <dbReference type="NCBI Taxonomy" id="314225"/>
    <lineage>
        <taxon>Bacteria</taxon>
        <taxon>Pseudomonadati</taxon>
        <taxon>Pseudomonadota</taxon>
        <taxon>Alphaproteobacteria</taxon>
        <taxon>Sphingomonadales</taxon>
        <taxon>Erythrobacteraceae</taxon>
        <taxon>Erythrobacter/Porphyrobacter group</taxon>
        <taxon>Erythrobacter</taxon>
    </lineage>
</organism>
<comment type="function">
    <text evidence="1">Catalyzes the reversible cyclization of carbamoyl aspartate to dihydroorotate.</text>
</comment>
<comment type="catalytic activity">
    <reaction evidence="1">
        <text>(S)-dihydroorotate + H2O = N-carbamoyl-L-aspartate + H(+)</text>
        <dbReference type="Rhea" id="RHEA:24296"/>
        <dbReference type="ChEBI" id="CHEBI:15377"/>
        <dbReference type="ChEBI" id="CHEBI:15378"/>
        <dbReference type="ChEBI" id="CHEBI:30864"/>
        <dbReference type="ChEBI" id="CHEBI:32814"/>
        <dbReference type="EC" id="3.5.2.3"/>
    </reaction>
</comment>
<comment type="cofactor">
    <cofactor evidence="1">
        <name>Zn(2+)</name>
        <dbReference type="ChEBI" id="CHEBI:29105"/>
    </cofactor>
    <text evidence="1">Binds 2 Zn(2+) ions per subunit.</text>
</comment>
<comment type="pathway">
    <text evidence="1">Pyrimidine metabolism; UMP biosynthesis via de novo pathway; (S)-dihydroorotate from bicarbonate: step 3/3.</text>
</comment>
<comment type="subunit">
    <text evidence="1">Homodimer.</text>
</comment>
<comment type="similarity">
    <text evidence="1">Belongs to the metallo-dependent hydrolases superfamily. DHOase family. Class II DHOase subfamily.</text>
</comment>
<keyword id="KW-0378">Hydrolase</keyword>
<keyword id="KW-0479">Metal-binding</keyword>
<keyword id="KW-0665">Pyrimidine biosynthesis</keyword>
<keyword id="KW-1185">Reference proteome</keyword>
<keyword id="KW-0862">Zinc</keyword>
<evidence type="ECO:0000255" key="1">
    <source>
        <dbReference type="HAMAP-Rule" id="MF_00219"/>
    </source>
</evidence>
<sequence>MTETLTIRRPDDWHLHFRDGAMMRGVVPYTARQFARAIVMPNLTPPVTTTALGAAYRERILAAVPEGVDFRPLMTAYLTDETDADDLIDGYTHGVFTAAKLYPANATTNSASGVTDVEALYPVFERMAAAGMVLCIHGEVTDADVDVFDREKEFIERTMAPLHAAIPALKIAFEHITTSDAVDFVVGANDNIGATITPQHLHINRNAMLVGGIQPHNYCLPVAKRETHRLALRQAATSGPPKFFLGTDSAPHEKHTKESACGCAGIFGAPYALESYLAVFEEEDALDKFEAFASLNGPAFYGLPVNDETITLERVPHNVPDSLETEGGKVVPFHAGQELNWRLK</sequence>
<proteinExistence type="inferred from homology"/>
<feature type="chain" id="PRO_1000024014" description="Dihydroorotase">
    <location>
        <begin position="1"/>
        <end position="344"/>
    </location>
</feature>
<feature type="active site" evidence="1">
    <location>
        <position position="248"/>
    </location>
</feature>
<feature type="binding site" evidence="1">
    <location>
        <position position="14"/>
    </location>
    <ligand>
        <name>Zn(2+)</name>
        <dbReference type="ChEBI" id="CHEBI:29105"/>
        <label>1</label>
    </ligand>
</feature>
<feature type="binding site" evidence="1">
    <location>
        <begin position="16"/>
        <end position="18"/>
    </location>
    <ligand>
        <name>substrate</name>
    </ligand>
</feature>
<feature type="binding site" evidence="1">
    <location>
        <position position="16"/>
    </location>
    <ligand>
        <name>Zn(2+)</name>
        <dbReference type="ChEBI" id="CHEBI:29105"/>
        <label>1</label>
    </ligand>
</feature>
<feature type="binding site" evidence="1">
    <location>
        <position position="42"/>
    </location>
    <ligand>
        <name>substrate</name>
    </ligand>
</feature>
<feature type="binding site" description="via carbamate group" evidence="1">
    <location>
        <position position="100"/>
    </location>
    <ligand>
        <name>Zn(2+)</name>
        <dbReference type="ChEBI" id="CHEBI:29105"/>
        <label>1</label>
    </ligand>
</feature>
<feature type="binding site" description="via carbamate group" evidence="1">
    <location>
        <position position="100"/>
    </location>
    <ligand>
        <name>Zn(2+)</name>
        <dbReference type="ChEBI" id="CHEBI:29105"/>
        <label>2</label>
    </ligand>
</feature>
<feature type="binding site" evidence="1">
    <location>
        <position position="137"/>
    </location>
    <ligand>
        <name>substrate</name>
    </ligand>
</feature>
<feature type="binding site" evidence="1">
    <location>
        <position position="137"/>
    </location>
    <ligand>
        <name>Zn(2+)</name>
        <dbReference type="ChEBI" id="CHEBI:29105"/>
        <label>2</label>
    </ligand>
</feature>
<feature type="binding site" evidence="1">
    <location>
        <position position="175"/>
    </location>
    <ligand>
        <name>Zn(2+)</name>
        <dbReference type="ChEBI" id="CHEBI:29105"/>
        <label>2</label>
    </ligand>
</feature>
<feature type="binding site" evidence="1">
    <location>
        <position position="220"/>
    </location>
    <ligand>
        <name>substrate</name>
    </ligand>
</feature>
<feature type="binding site" evidence="1">
    <location>
        <position position="248"/>
    </location>
    <ligand>
        <name>Zn(2+)</name>
        <dbReference type="ChEBI" id="CHEBI:29105"/>
        <label>1</label>
    </ligand>
</feature>
<feature type="binding site" evidence="1">
    <location>
        <position position="252"/>
    </location>
    <ligand>
        <name>substrate</name>
    </ligand>
</feature>
<feature type="binding site" evidence="1">
    <location>
        <position position="264"/>
    </location>
    <ligand>
        <name>substrate</name>
    </ligand>
</feature>
<feature type="modified residue" description="N6-carboxylysine" evidence="1">
    <location>
        <position position="100"/>
    </location>
</feature>
<name>PYRC_ERYLH</name>
<accession>Q2NCC9</accession>
<protein>
    <recommendedName>
        <fullName evidence="1">Dihydroorotase</fullName>
        <shortName evidence="1">DHOase</shortName>
        <ecNumber evidence="1">3.5.2.3</ecNumber>
    </recommendedName>
</protein>
<gene>
    <name evidence="1" type="primary">pyrC</name>
    <name type="ordered locus">ELI_02850</name>
</gene>
<reference key="1">
    <citation type="journal article" date="2009" name="J. Bacteriol.">
        <title>Complete genome sequence of Erythrobacter litoralis HTCC2594.</title>
        <authorList>
            <person name="Oh H.M."/>
            <person name="Giovannoni S.J."/>
            <person name="Ferriera S."/>
            <person name="Johnson J."/>
            <person name="Cho J.C."/>
        </authorList>
    </citation>
    <scope>NUCLEOTIDE SEQUENCE [LARGE SCALE GENOMIC DNA]</scope>
    <source>
        <strain>HTCC2594</strain>
    </source>
</reference>
<dbReference type="EC" id="3.5.2.3" evidence="1"/>
<dbReference type="EMBL" id="CP000157">
    <property type="protein sequence ID" value="ABC62662.1"/>
    <property type="molecule type" value="Genomic_DNA"/>
</dbReference>
<dbReference type="RefSeq" id="WP_011413538.1">
    <property type="nucleotide sequence ID" value="NC_007722.1"/>
</dbReference>
<dbReference type="SMR" id="Q2NCC9"/>
<dbReference type="STRING" id="314225.ELI_02850"/>
<dbReference type="KEGG" id="eli:ELI_02850"/>
<dbReference type="eggNOG" id="COG0418">
    <property type="taxonomic scope" value="Bacteria"/>
</dbReference>
<dbReference type="HOGENOM" id="CLU_041558_1_0_5"/>
<dbReference type="OrthoDB" id="9808095at2"/>
<dbReference type="UniPathway" id="UPA00070">
    <property type="reaction ID" value="UER00117"/>
</dbReference>
<dbReference type="Proteomes" id="UP000008808">
    <property type="component" value="Chromosome"/>
</dbReference>
<dbReference type="GO" id="GO:0005829">
    <property type="term" value="C:cytosol"/>
    <property type="evidence" value="ECO:0007669"/>
    <property type="project" value="TreeGrafter"/>
</dbReference>
<dbReference type="GO" id="GO:0004151">
    <property type="term" value="F:dihydroorotase activity"/>
    <property type="evidence" value="ECO:0007669"/>
    <property type="project" value="UniProtKB-UniRule"/>
</dbReference>
<dbReference type="GO" id="GO:0008270">
    <property type="term" value="F:zinc ion binding"/>
    <property type="evidence" value="ECO:0007669"/>
    <property type="project" value="UniProtKB-UniRule"/>
</dbReference>
<dbReference type="GO" id="GO:0006207">
    <property type="term" value="P:'de novo' pyrimidine nucleobase biosynthetic process"/>
    <property type="evidence" value="ECO:0007669"/>
    <property type="project" value="TreeGrafter"/>
</dbReference>
<dbReference type="GO" id="GO:0044205">
    <property type="term" value="P:'de novo' UMP biosynthetic process"/>
    <property type="evidence" value="ECO:0007669"/>
    <property type="project" value="UniProtKB-UniRule"/>
</dbReference>
<dbReference type="CDD" id="cd01294">
    <property type="entry name" value="DHOase"/>
    <property type="match status" value="1"/>
</dbReference>
<dbReference type="FunFam" id="3.20.20.140:FF:000006">
    <property type="entry name" value="Dihydroorotase"/>
    <property type="match status" value="1"/>
</dbReference>
<dbReference type="Gene3D" id="3.20.20.140">
    <property type="entry name" value="Metal-dependent hydrolases"/>
    <property type="match status" value="1"/>
</dbReference>
<dbReference type="HAMAP" id="MF_00219">
    <property type="entry name" value="PyrC_classII"/>
    <property type="match status" value="1"/>
</dbReference>
<dbReference type="InterPro" id="IPR006680">
    <property type="entry name" value="Amidohydro-rel"/>
</dbReference>
<dbReference type="InterPro" id="IPR004721">
    <property type="entry name" value="DHOdimr"/>
</dbReference>
<dbReference type="InterPro" id="IPR002195">
    <property type="entry name" value="Dihydroorotase_CS"/>
</dbReference>
<dbReference type="InterPro" id="IPR032466">
    <property type="entry name" value="Metal_Hydrolase"/>
</dbReference>
<dbReference type="NCBIfam" id="TIGR00856">
    <property type="entry name" value="pyrC_dimer"/>
    <property type="match status" value="1"/>
</dbReference>
<dbReference type="PANTHER" id="PTHR43137">
    <property type="entry name" value="DIHYDROOROTASE"/>
    <property type="match status" value="1"/>
</dbReference>
<dbReference type="PANTHER" id="PTHR43137:SF1">
    <property type="entry name" value="DIHYDROOROTASE"/>
    <property type="match status" value="1"/>
</dbReference>
<dbReference type="Pfam" id="PF01979">
    <property type="entry name" value="Amidohydro_1"/>
    <property type="match status" value="1"/>
</dbReference>
<dbReference type="PIRSF" id="PIRSF001237">
    <property type="entry name" value="DHOdimr"/>
    <property type="match status" value="1"/>
</dbReference>
<dbReference type="SUPFAM" id="SSF51556">
    <property type="entry name" value="Metallo-dependent hydrolases"/>
    <property type="match status" value="1"/>
</dbReference>
<dbReference type="PROSITE" id="PS00482">
    <property type="entry name" value="DIHYDROOROTASE_1"/>
    <property type="match status" value="1"/>
</dbReference>
<dbReference type="PROSITE" id="PS00483">
    <property type="entry name" value="DIHYDROOROTASE_2"/>
    <property type="match status" value="1"/>
</dbReference>